<protein>
    <recommendedName>
        <fullName evidence="1">Elongation factor 4</fullName>
        <shortName evidence="1">EF-4</shortName>
        <ecNumber evidence="1">3.6.5.n1</ecNumber>
    </recommendedName>
    <alternativeName>
        <fullName evidence="1">Ribosomal back-translocase LepA</fullName>
    </alternativeName>
</protein>
<dbReference type="EC" id="3.6.5.n1" evidence="1"/>
<dbReference type="EMBL" id="CP001138">
    <property type="protein sequence ID" value="ACH49117.1"/>
    <property type="molecule type" value="Genomic_DNA"/>
</dbReference>
<dbReference type="RefSeq" id="WP_000790154.1">
    <property type="nucleotide sequence ID" value="NC_011149.1"/>
</dbReference>
<dbReference type="SMR" id="B5F1G3"/>
<dbReference type="KEGG" id="sea:SeAg_B2746"/>
<dbReference type="HOGENOM" id="CLU_009995_3_3_6"/>
<dbReference type="Proteomes" id="UP000008819">
    <property type="component" value="Chromosome"/>
</dbReference>
<dbReference type="GO" id="GO:0005886">
    <property type="term" value="C:plasma membrane"/>
    <property type="evidence" value="ECO:0007669"/>
    <property type="project" value="UniProtKB-SubCell"/>
</dbReference>
<dbReference type="GO" id="GO:0005525">
    <property type="term" value="F:GTP binding"/>
    <property type="evidence" value="ECO:0007669"/>
    <property type="project" value="UniProtKB-UniRule"/>
</dbReference>
<dbReference type="GO" id="GO:0003924">
    <property type="term" value="F:GTPase activity"/>
    <property type="evidence" value="ECO:0007669"/>
    <property type="project" value="UniProtKB-UniRule"/>
</dbReference>
<dbReference type="GO" id="GO:0097216">
    <property type="term" value="F:guanosine tetraphosphate binding"/>
    <property type="evidence" value="ECO:0007669"/>
    <property type="project" value="UniProtKB-ARBA"/>
</dbReference>
<dbReference type="GO" id="GO:0043022">
    <property type="term" value="F:ribosome binding"/>
    <property type="evidence" value="ECO:0007669"/>
    <property type="project" value="UniProtKB-UniRule"/>
</dbReference>
<dbReference type="GO" id="GO:0003746">
    <property type="term" value="F:translation elongation factor activity"/>
    <property type="evidence" value="ECO:0007669"/>
    <property type="project" value="UniProtKB-UniRule"/>
</dbReference>
<dbReference type="GO" id="GO:0045727">
    <property type="term" value="P:positive regulation of translation"/>
    <property type="evidence" value="ECO:0007669"/>
    <property type="project" value="UniProtKB-UniRule"/>
</dbReference>
<dbReference type="CDD" id="cd03699">
    <property type="entry name" value="EF4_II"/>
    <property type="match status" value="1"/>
</dbReference>
<dbReference type="CDD" id="cd16260">
    <property type="entry name" value="EF4_III"/>
    <property type="match status" value="1"/>
</dbReference>
<dbReference type="CDD" id="cd01890">
    <property type="entry name" value="LepA"/>
    <property type="match status" value="1"/>
</dbReference>
<dbReference type="CDD" id="cd03709">
    <property type="entry name" value="lepA_C"/>
    <property type="match status" value="1"/>
</dbReference>
<dbReference type="FunFam" id="3.30.70.240:FF:000005">
    <property type="entry name" value="Elongation factor 4"/>
    <property type="match status" value="1"/>
</dbReference>
<dbReference type="FunFam" id="3.40.50.300:FF:000078">
    <property type="entry name" value="Elongation factor 4"/>
    <property type="match status" value="1"/>
</dbReference>
<dbReference type="FunFam" id="2.40.30.10:FF:000015">
    <property type="entry name" value="Translation factor GUF1, mitochondrial"/>
    <property type="match status" value="1"/>
</dbReference>
<dbReference type="FunFam" id="3.30.70.2570:FF:000001">
    <property type="entry name" value="Translation factor GUF1, mitochondrial"/>
    <property type="match status" value="1"/>
</dbReference>
<dbReference type="FunFam" id="3.30.70.870:FF:000004">
    <property type="entry name" value="Translation factor GUF1, mitochondrial"/>
    <property type="match status" value="1"/>
</dbReference>
<dbReference type="Gene3D" id="3.30.70.240">
    <property type="match status" value="1"/>
</dbReference>
<dbReference type="Gene3D" id="3.30.70.2570">
    <property type="entry name" value="Elongation factor 4, C-terminal domain"/>
    <property type="match status" value="1"/>
</dbReference>
<dbReference type="Gene3D" id="3.30.70.870">
    <property type="entry name" value="Elongation Factor G (Translational Gtpase), domain 3"/>
    <property type="match status" value="1"/>
</dbReference>
<dbReference type="Gene3D" id="3.40.50.300">
    <property type="entry name" value="P-loop containing nucleotide triphosphate hydrolases"/>
    <property type="match status" value="1"/>
</dbReference>
<dbReference type="Gene3D" id="2.40.30.10">
    <property type="entry name" value="Translation factors"/>
    <property type="match status" value="1"/>
</dbReference>
<dbReference type="HAMAP" id="MF_00071">
    <property type="entry name" value="LepA"/>
    <property type="match status" value="1"/>
</dbReference>
<dbReference type="InterPro" id="IPR006297">
    <property type="entry name" value="EF-4"/>
</dbReference>
<dbReference type="InterPro" id="IPR035647">
    <property type="entry name" value="EFG_III/V"/>
</dbReference>
<dbReference type="InterPro" id="IPR000640">
    <property type="entry name" value="EFG_V-like"/>
</dbReference>
<dbReference type="InterPro" id="IPR004161">
    <property type="entry name" value="EFTu-like_2"/>
</dbReference>
<dbReference type="InterPro" id="IPR031157">
    <property type="entry name" value="G_TR_CS"/>
</dbReference>
<dbReference type="InterPro" id="IPR038363">
    <property type="entry name" value="LepA_C_sf"/>
</dbReference>
<dbReference type="InterPro" id="IPR013842">
    <property type="entry name" value="LepA_CTD"/>
</dbReference>
<dbReference type="InterPro" id="IPR035654">
    <property type="entry name" value="LepA_IV"/>
</dbReference>
<dbReference type="InterPro" id="IPR027417">
    <property type="entry name" value="P-loop_NTPase"/>
</dbReference>
<dbReference type="InterPro" id="IPR005225">
    <property type="entry name" value="Small_GTP-bd"/>
</dbReference>
<dbReference type="InterPro" id="IPR000795">
    <property type="entry name" value="T_Tr_GTP-bd_dom"/>
</dbReference>
<dbReference type="NCBIfam" id="TIGR01393">
    <property type="entry name" value="lepA"/>
    <property type="match status" value="1"/>
</dbReference>
<dbReference type="NCBIfam" id="TIGR00231">
    <property type="entry name" value="small_GTP"/>
    <property type="match status" value="1"/>
</dbReference>
<dbReference type="PANTHER" id="PTHR43512:SF4">
    <property type="entry name" value="TRANSLATION FACTOR GUF1 HOMOLOG, CHLOROPLASTIC"/>
    <property type="match status" value="1"/>
</dbReference>
<dbReference type="PANTHER" id="PTHR43512">
    <property type="entry name" value="TRANSLATION FACTOR GUF1-RELATED"/>
    <property type="match status" value="1"/>
</dbReference>
<dbReference type="Pfam" id="PF00679">
    <property type="entry name" value="EFG_C"/>
    <property type="match status" value="1"/>
</dbReference>
<dbReference type="Pfam" id="PF00009">
    <property type="entry name" value="GTP_EFTU"/>
    <property type="match status" value="1"/>
</dbReference>
<dbReference type="Pfam" id="PF03144">
    <property type="entry name" value="GTP_EFTU_D2"/>
    <property type="match status" value="1"/>
</dbReference>
<dbReference type="Pfam" id="PF06421">
    <property type="entry name" value="LepA_C"/>
    <property type="match status" value="1"/>
</dbReference>
<dbReference type="PRINTS" id="PR00315">
    <property type="entry name" value="ELONGATNFCT"/>
</dbReference>
<dbReference type="SUPFAM" id="SSF54980">
    <property type="entry name" value="EF-G C-terminal domain-like"/>
    <property type="match status" value="2"/>
</dbReference>
<dbReference type="SUPFAM" id="SSF52540">
    <property type="entry name" value="P-loop containing nucleoside triphosphate hydrolases"/>
    <property type="match status" value="1"/>
</dbReference>
<dbReference type="PROSITE" id="PS00301">
    <property type="entry name" value="G_TR_1"/>
    <property type="match status" value="1"/>
</dbReference>
<dbReference type="PROSITE" id="PS51722">
    <property type="entry name" value="G_TR_2"/>
    <property type="match status" value="1"/>
</dbReference>
<accession>B5F1G3</accession>
<proteinExistence type="inferred from homology"/>
<feature type="chain" id="PRO_1000092438" description="Elongation factor 4">
    <location>
        <begin position="1"/>
        <end position="599"/>
    </location>
</feature>
<feature type="domain" description="tr-type G">
    <location>
        <begin position="2"/>
        <end position="184"/>
    </location>
</feature>
<feature type="binding site" evidence="1">
    <location>
        <begin position="14"/>
        <end position="19"/>
    </location>
    <ligand>
        <name>GTP</name>
        <dbReference type="ChEBI" id="CHEBI:37565"/>
    </ligand>
</feature>
<feature type="binding site" evidence="1">
    <location>
        <begin position="131"/>
        <end position="134"/>
    </location>
    <ligand>
        <name>GTP</name>
        <dbReference type="ChEBI" id="CHEBI:37565"/>
    </ligand>
</feature>
<comment type="function">
    <text evidence="1">Required for accurate and efficient protein synthesis under certain stress conditions. May act as a fidelity factor of the translation reaction, by catalyzing a one-codon backward translocation of tRNAs on improperly translocated ribosomes. Back-translocation proceeds from a post-translocation (POST) complex to a pre-translocation (PRE) complex, thus giving elongation factor G a second chance to translocate the tRNAs correctly. Binds to ribosomes in a GTP-dependent manner.</text>
</comment>
<comment type="catalytic activity">
    <reaction evidence="1">
        <text>GTP + H2O = GDP + phosphate + H(+)</text>
        <dbReference type="Rhea" id="RHEA:19669"/>
        <dbReference type="ChEBI" id="CHEBI:15377"/>
        <dbReference type="ChEBI" id="CHEBI:15378"/>
        <dbReference type="ChEBI" id="CHEBI:37565"/>
        <dbReference type="ChEBI" id="CHEBI:43474"/>
        <dbReference type="ChEBI" id="CHEBI:58189"/>
        <dbReference type="EC" id="3.6.5.n1"/>
    </reaction>
</comment>
<comment type="subcellular location">
    <subcellularLocation>
        <location evidence="1">Cell inner membrane</location>
        <topology evidence="1">Peripheral membrane protein</topology>
        <orientation evidence="1">Cytoplasmic side</orientation>
    </subcellularLocation>
</comment>
<comment type="similarity">
    <text evidence="1">Belongs to the TRAFAC class translation factor GTPase superfamily. Classic translation factor GTPase family. LepA subfamily.</text>
</comment>
<organism>
    <name type="scientific">Salmonella agona (strain SL483)</name>
    <dbReference type="NCBI Taxonomy" id="454166"/>
    <lineage>
        <taxon>Bacteria</taxon>
        <taxon>Pseudomonadati</taxon>
        <taxon>Pseudomonadota</taxon>
        <taxon>Gammaproteobacteria</taxon>
        <taxon>Enterobacterales</taxon>
        <taxon>Enterobacteriaceae</taxon>
        <taxon>Salmonella</taxon>
    </lineage>
</organism>
<sequence>MKNIRNFSIIAHIDHGKSTLSDRIIQICGGLSDREMEAQVLDSMDLERERGITIKAQSVTLDFKASDGETYQLNFIDTPGHVDFSYEVSRSLAACEGALLVVDAGQGVEAQTLANCYTAMEMDLEVVPVLNKIDLPAADPERVAEEIEDIVGIDATDAVRCSAKTGVGVTDVLERLVRDIPPPQGDPDGPLQALIIDSWFDNYLGVVSLVRIKNGTMRKGDKIKVMSTGQTYNADRLGIFTPKQVDRTELKCGEVGWLVCAIKDILGAPVGDTLTSARNPAEKALPGFKKVKPQVYAGLFPVSSDDYESFRDALGKLSLNDASLFYEPESSSALGFGFRCGFLGLLHMEIIQERLEREYDLDLITTAPTVVYEVETTAKETIYVDSPSKLPPLNNIYELREPIAECHMLLPQAYLGNVITLCIEKRGVQTNMVYHGNQVALTYEIPMAEVVLDFFDRLKSTSRGYASLDYNFKRFQASDMVRVDVLINNERVDALALITHRDNSQSRGRELVEKMKDLIPRQQFDIAIQAAIGTHIIARSTVKQLRKNVLAKCYGGDISRKKKLLQKQKEGKKRMKQIGNVELPQEAFLAILHVGKDNK</sequence>
<evidence type="ECO:0000255" key="1">
    <source>
        <dbReference type="HAMAP-Rule" id="MF_00071"/>
    </source>
</evidence>
<reference key="1">
    <citation type="journal article" date="2011" name="J. Bacteriol.">
        <title>Comparative genomics of 28 Salmonella enterica isolates: evidence for CRISPR-mediated adaptive sublineage evolution.</title>
        <authorList>
            <person name="Fricke W.F."/>
            <person name="Mammel M.K."/>
            <person name="McDermott P.F."/>
            <person name="Tartera C."/>
            <person name="White D.G."/>
            <person name="Leclerc J.E."/>
            <person name="Ravel J."/>
            <person name="Cebula T.A."/>
        </authorList>
    </citation>
    <scope>NUCLEOTIDE SEQUENCE [LARGE SCALE GENOMIC DNA]</scope>
    <source>
        <strain>SL483</strain>
    </source>
</reference>
<name>LEPA_SALA4</name>
<keyword id="KW-0997">Cell inner membrane</keyword>
<keyword id="KW-1003">Cell membrane</keyword>
<keyword id="KW-0342">GTP-binding</keyword>
<keyword id="KW-0378">Hydrolase</keyword>
<keyword id="KW-0472">Membrane</keyword>
<keyword id="KW-0547">Nucleotide-binding</keyword>
<keyword id="KW-0648">Protein biosynthesis</keyword>
<gene>
    <name evidence="1" type="primary">lepA</name>
    <name type="ordered locus">SeAg_B2746</name>
</gene>